<organism>
    <name type="scientific">Escherichia coli O81 (strain ED1a)</name>
    <dbReference type="NCBI Taxonomy" id="585397"/>
    <lineage>
        <taxon>Bacteria</taxon>
        <taxon>Pseudomonadati</taxon>
        <taxon>Pseudomonadota</taxon>
        <taxon>Gammaproteobacteria</taxon>
        <taxon>Enterobacterales</taxon>
        <taxon>Enterobacteriaceae</taxon>
        <taxon>Escherichia</taxon>
    </lineage>
</organism>
<sequence length="197" mass="21856">MSSKEQKTPEGQAPEEIIMDQHEEIEAVEPEASAEQVDPRDEKIANLEAQLAEAQTRERDGILRVKAEMENLRRRTELDIEKAHKFALEKFINELLPVIDSLDRALEVADKANPDMSAMVEGIELTLKSMLDVVRKFGVEVIAETNVPLDPNVHQAIAMVESDDVAPGNVLGIMQKGYTLNGRTIRAAMVTVAKAKD</sequence>
<feature type="chain" id="PRO_1000164191" description="Protein GrpE">
    <location>
        <begin position="1"/>
        <end position="197"/>
    </location>
</feature>
<feature type="region of interest" description="Disordered" evidence="2">
    <location>
        <begin position="1"/>
        <end position="39"/>
    </location>
</feature>
<name>GRPE_ECO81</name>
<comment type="function">
    <text evidence="1">Participates actively in the response to hyperosmotic and heat shock by preventing the aggregation of stress-denatured proteins, in association with DnaK and GrpE. It is the nucleotide exchange factor for DnaK and may function as a thermosensor. Unfolded proteins bind initially to DnaJ; upon interaction with the DnaJ-bound protein, DnaK hydrolyzes its bound ATP, resulting in the formation of a stable complex. GrpE releases ADP from DnaK; ATP binding to DnaK triggers the release of the substrate protein, thus completing the reaction cycle. Several rounds of ATP-dependent interactions between DnaJ, DnaK and GrpE are required for fully efficient folding.</text>
</comment>
<comment type="subunit">
    <text evidence="1">Homodimer.</text>
</comment>
<comment type="subcellular location">
    <subcellularLocation>
        <location evidence="1">Cytoplasm</location>
    </subcellularLocation>
</comment>
<comment type="similarity">
    <text evidence="1">Belongs to the GrpE family.</text>
</comment>
<protein>
    <recommendedName>
        <fullName evidence="1">Protein GrpE</fullName>
    </recommendedName>
    <alternativeName>
        <fullName evidence="1">HSP-70 cofactor</fullName>
    </alternativeName>
</protein>
<accession>B7MYA6</accession>
<proteinExistence type="inferred from homology"/>
<reference key="1">
    <citation type="journal article" date="2009" name="PLoS Genet.">
        <title>Organised genome dynamics in the Escherichia coli species results in highly diverse adaptive paths.</title>
        <authorList>
            <person name="Touchon M."/>
            <person name="Hoede C."/>
            <person name="Tenaillon O."/>
            <person name="Barbe V."/>
            <person name="Baeriswyl S."/>
            <person name="Bidet P."/>
            <person name="Bingen E."/>
            <person name="Bonacorsi S."/>
            <person name="Bouchier C."/>
            <person name="Bouvet O."/>
            <person name="Calteau A."/>
            <person name="Chiapello H."/>
            <person name="Clermont O."/>
            <person name="Cruveiller S."/>
            <person name="Danchin A."/>
            <person name="Diard M."/>
            <person name="Dossat C."/>
            <person name="Karoui M.E."/>
            <person name="Frapy E."/>
            <person name="Garry L."/>
            <person name="Ghigo J.M."/>
            <person name="Gilles A.M."/>
            <person name="Johnson J."/>
            <person name="Le Bouguenec C."/>
            <person name="Lescat M."/>
            <person name="Mangenot S."/>
            <person name="Martinez-Jehanne V."/>
            <person name="Matic I."/>
            <person name="Nassif X."/>
            <person name="Oztas S."/>
            <person name="Petit M.A."/>
            <person name="Pichon C."/>
            <person name="Rouy Z."/>
            <person name="Ruf C.S."/>
            <person name="Schneider D."/>
            <person name="Tourret J."/>
            <person name="Vacherie B."/>
            <person name="Vallenet D."/>
            <person name="Medigue C."/>
            <person name="Rocha E.P.C."/>
            <person name="Denamur E."/>
        </authorList>
    </citation>
    <scope>NUCLEOTIDE SEQUENCE [LARGE SCALE GENOMIC DNA]</scope>
    <source>
        <strain>ED1a</strain>
    </source>
</reference>
<dbReference type="EMBL" id="CU928162">
    <property type="protein sequence ID" value="CAR09072.1"/>
    <property type="molecule type" value="Genomic_DNA"/>
</dbReference>
<dbReference type="RefSeq" id="WP_001332400.1">
    <property type="nucleotide sequence ID" value="NC_011745.1"/>
</dbReference>
<dbReference type="SMR" id="B7MYA6"/>
<dbReference type="KEGG" id="ecq:ECED1_3052"/>
<dbReference type="HOGENOM" id="CLU_057217_6_0_6"/>
<dbReference type="Proteomes" id="UP000000748">
    <property type="component" value="Chromosome"/>
</dbReference>
<dbReference type="GO" id="GO:0005829">
    <property type="term" value="C:cytosol"/>
    <property type="evidence" value="ECO:0007669"/>
    <property type="project" value="TreeGrafter"/>
</dbReference>
<dbReference type="GO" id="GO:0000774">
    <property type="term" value="F:adenyl-nucleotide exchange factor activity"/>
    <property type="evidence" value="ECO:0007669"/>
    <property type="project" value="InterPro"/>
</dbReference>
<dbReference type="GO" id="GO:0042803">
    <property type="term" value="F:protein homodimerization activity"/>
    <property type="evidence" value="ECO:0007669"/>
    <property type="project" value="InterPro"/>
</dbReference>
<dbReference type="GO" id="GO:0051087">
    <property type="term" value="F:protein-folding chaperone binding"/>
    <property type="evidence" value="ECO:0007669"/>
    <property type="project" value="InterPro"/>
</dbReference>
<dbReference type="GO" id="GO:0051082">
    <property type="term" value="F:unfolded protein binding"/>
    <property type="evidence" value="ECO:0007669"/>
    <property type="project" value="TreeGrafter"/>
</dbReference>
<dbReference type="GO" id="GO:0006457">
    <property type="term" value="P:protein folding"/>
    <property type="evidence" value="ECO:0007669"/>
    <property type="project" value="InterPro"/>
</dbReference>
<dbReference type="CDD" id="cd00446">
    <property type="entry name" value="GrpE"/>
    <property type="match status" value="1"/>
</dbReference>
<dbReference type="FunFam" id="2.30.22.10:FF:000001">
    <property type="entry name" value="Protein GrpE"/>
    <property type="match status" value="1"/>
</dbReference>
<dbReference type="FunFam" id="3.90.20.20:FF:000001">
    <property type="entry name" value="Protein GrpE"/>
    <property type="match status" value="1"/>
</dbReference>
<dbReference type="Gene3D" id="3.90.20.20">
    <property type="match status" value="1"/>
</dbReference>
<dbReference type="Gene3D" id="2.30.22.10">
    <property type="entry name" value="Head domain of nucleotide exchange factor GrpE"/>
    <property type="match status" value="1"/>
</dbReference>
<dbReference type="HAMAP" id="MF_01151">
    <property type="entry name" value="GrpE"/>
    <property type="match status" value="1"/>
</dbReference>
<dbReference type="InterPro" id="IPR000740">
    <property type="entry name" value="GrpE"/>
</dbReference>
<dbReference type="InterPro" id="IPR013805">
    <property type="entry name" value="GrpE_coiled_coil"/>
</dbReference>
<dbReference type="InterPro" id="IPR009012">
    <property type="entry name" value="GrpE_head"/>
</dbReference>
<dbReference type="NCBIfam" id="NF007655">
    <property type="entry name" value="PRK10325.1"/>
    <property type="match status" value="1"/>
</dbReference>
<dbReference type="NCBIfam" id="NF010738">
    <property type="entry name" value="PRK14140.1"/>
    <property type="match status" value="1"/>
</dbReference>
<dbReference type="NCBIfam" id="NF010748">
    <property type="entry name" value="PRK14150.1"/>
    <property type="match status" value="1"/>
</dbReference>
<dbReference type="PANTHER" id="PTHR21237">
    <property type="entry name" value="GRPE PROTEIN"/>
    <property type="match status" value="1"/>
</dbReference>
<dbReference type="PANTHER" id="PTHR21237:SF23">
    <property type="entry name" value="GRPE PROTEIN HOMOLOG, MITOCHONDRIAL"/>
    <property type="match status" value="1"/>
</dbReference>
<dbReference type="Pfam" id="PF01025">
    <property type="entry name" value="GrpE"/>
    <property type="match status" value="1"/>
</dbReference>
<dbReference type="PRINTS" id="PR00773">
    <property type="entry name" value="GRPEPROTEIN"/>
</dbReference>
<dbReference type="SUPFAM" id="SSF58014">
    <property type="entry name" value="Coiled-coil domain of nucleotide exchange factor GrpE"/>
    <property type="match status" value="1"/>
</dbReference>
<dbReference type="SUPFAM" id="SSF51064">
    <property type="entry name" value="Head domain of nucleotide exchange factor GrpE"/>
    <property type="match status" value="1"/>
</dbReference>
<dbReference type="PROSITE" id="PS01071">
    <property type="entry name" value="GRPE"/>
    <property type="match status" value="1"/>
</dbReference>
<evidence type="ECO:0000255" key="1">
    <source>
        <dbReference type="HAMAP-Rule" id="MF_01151"/>
    </source>
</evidence>
<evidence type="ECO:0000256" key="2">
    <source>
        <dbReference type="SAM" id="MobiDB-lite"/>
    </source>
</evidence>
<gene>
    <name evidence="1" type="primary">grpE</name>
    <name type="ordered locus">ECED1_3052</name>
</gene>
<keyword id="KW-0143">Chaperone</keyword>
<keyword id="KW-0963">Cytoplasm</keyword>
<keyword id="KW-0346">Stress response</keyword>